<evidence type="ECO:0000250" key="1"/>
<evidence type="ECO:0000255" key="2"/>
<evidence type="ECO:0000255" key="3">
    <source>
        <dbReference type="HAMAP-Rule" id="MF_04090"/>
    </source>
</evidence>
<evidence type="ECO:0000255" key="4">
    <source>
        <dbReference type="PROSITE-ProRule" id="PRU00266"/>
    </source>
</evidence>
<keyword id="KW-1035">Host cytoplasm</keyword>
<keyword id="KW-1185">Reference proteome</keyword>
<keyword id="KW-0694">RNA-binding</keyword>
<keyword id="KW-0810">Translation regulation</keyword>
<protein>
    <recommendedName>
        <fullName evidence="3">Non-structural protein 3</fullName>
        <shortName evidence="3">NSP3</shortName>
    </recommendedName>
    <alternativeName>
        <fullName evidence="3">NCVP4</fullName>
    </alternativeName>
    <alternativeName>
        <fullName evidence="3">Non-structural RNA-binding protein 34</fullName>
        <shortName evidence="3">NS34</shortName>
    </alternativeName>
    <component>
        <recommendedName>
            <fullName>p38</fullName>
        </recommendedName>
    </component>
    <component>
        <recommendedName>
            <fullName>p8</fullName>
        </recommendedName>
    </component>
</protein>
<feature type="chain" id="PRO_0000369885" description="Non-structural protein 3">
    <location>
        <begin position="1"/>
        <end position="402"/>
    </location>
</feature>
<feature type="chain" id="PRO_0000369886" description="p38" evidence="1">
    <location>
        <begin position="1"/>
        <end position="333"/>
    </location>
</feature>
<feature type="chain" id="PRO_0000369887" description="p8" evidence="1">
    <location>
        <begin position="334"/>
        <end position="402"/>
    </location>
</feature>
<feature type="domain" description="DRBM" evidence="4">
    <location>
        <begin position="334"/>
        <end position="402"/>
    </location>
</feature>
<feature type="site" description="Cleavage; by autolysis" evidence="2">
    <location>
        <begin position="333"/>
        <end position="334"/>
    </location>
</feature>
<proteinExistence type="inferred from homology"/>
<accession>Q9PY95</accession>
<organism>
    <name type="scientific">Rotavirus C (isolate RVC/Human/United Kingdom/Bristol/1989)</name>
    <name type="common">RV-C</name>
    <dbReference type="NCBI Taxonomy" id="31567"/>
    <lineage>
        <taxon>Viruses</taxon>
        <taxon>Riboviria</taxon>
        <taxon>Orthornavirae</taxon>
        <taxon>Duplornaviricota</taxon>
        <taxon>Resentoviricetes</taxon>
        <taxon>Reovirales</taxon>
        <taxon>Sedoreoviridae</taxon>
        <taxon>Rotavirus</taxon>
        <taxon>Rotavirus C</taxon>
    </lineage>
</organism>
<name>NSP3_ROTHC</name>
<organismHost>
    <name type="scientific">Homo sapiens</name>
    <name type="common">Human</name>
    <dbReference type="NCBI Taxonomy" id="9606"/>
</organismHost>
<sequence>MATQASVEWIFNVAGSAASSSLDKAIKDAGGSENFSKYVITKFYDNYKDCIDDSGVYNACIGRAKTIDKALNDPKVAERNEEWYTNVATISRLDLELAELKLMLSNLGIKREERVLNSMFSVVREKGRSSNVIMMKQNAVKMIEEGKLKIKVERNETYTESLKNKIEELECIIDAFEKGKDITIDLDAMNGEVKLDGNSCSYNSTAALVSTILGTPIKMYNESGQPLFDVGNYMNPKNIIEKMIELEIPIFKSDYRNNESPDFDSWNERSNLKIVSVNDCHAICIFKFENNWWCFDDGRLKKHNGAGYPLIVANSKFQIDKILISGDIELNPGPDILVTLNDYITKYQLKLECTFDIFLEDDGSITYTCYMKLESAEAIGSGRSKKEAKRIAAYDILDQLGI</sequence>
<reference key="1">
    <citation type="journal article" date="1999" name="J. Gen. Virol.">
        <title>Molecular characterization of human group C rotavirus genes 6, 7 and 9.</title>
        <authorList>
            <person name="James V.L."/>
            <person name="Lambden P.R."/>
            <person name="Deng Y."/>
            <person name="Caul E.O."/>
            <person name="Clarke I.N."/>
        </authorList>
    </citation>
    <scope>NUCLEOTIDE SEQUENCE [GENOMIC RNA]</scope>
</reference>
<dbReference type="EMBL" id="AJ132203">
    <property type="protein sequence ID" value="CAB52751.1"/>
    <property type="molecule type" value="Genomic_RNA"/>
</dbReference>
<dbReference type="RefSeq" id="YP_392486.1">
    <property type="nucleotide sequence ID" value="NC_007543.1"/>
</dbReference>
<dbReference type="SMR" id="Q9PY95"/>
<dbReference type="GeneID" id="3773128"/>
<dbReference type="KEGG" id="vg:3773128"/>
<dbReference type="Proteomes" id="UP000007664">
    <property type="component" value="Genome"/>
</dbReference>
<dbReference type="GO" id="GO:0030430">
    <property type="term" value="C:host cell cytoplasm"/>
    <property type="evidence" value="ECO:0007669"/>
    <property type="project" value="UniProtKB-SubCell"/>
</dbReference>
<dbReference type="GO" id="GO:0003723">
    <property type="term" value="F:RNA binding"/>
    <property type="evidence" value="ECO:0007669"/>
    <property type="project" value="UniProtKB-UniRule"/>
</dbReference>
<dbReference type="GO" id="GO:0006417">
    <property type="term" value="P:regulation of translation"/>
    <property type="evidence" value="ECO:0007669"/>
    <property type="project" value="UniProtKB-UniRule"/>
</dbReference>
<dbReference type="CDD" id="cd20714">
    <property type="entry name" value="NSP3_rotavirus"/>
    <property type="match status" value="1"/>
</dbReference>
<dbReference type="Gene3D" id="3.30.160.20">
    <property type="match status" value="1"/>
</dbReference>
<dbReference type="Gene3D" id="3.30.70.1610">
    <property type="match status" value="1"/>
</dbReference>
<dbReference type="Gene3D" id="6.10.280.20">
    <property type="entry name" value="Rotavirus non-structural protein NSP3, N-terminal domain"/>
    <property type="match status" value="1"/>
</dbReference>
<dbReference type="HAMAP" id="MF_04090">
    <property type="entry name" value="ROTA_NSP3"/>
    <property type="match status" value="1"/>
</dbReference>
<dbReference type="InterPro" id="IPR014720">
    <property type="entry name" value="dsRBD_dom"/>
</dbReference>
<dbReference type="InterPro" id="IPR042519">
    <property type="entry name" value="NSP3_N_rotavirus"/>
</dbReference>
<dbReference type="InterPro" id="IPR036082">
    <property type="entry name" value="NSP3_sf"/>
</dbReference>
<dbReference type="InterPro" id="IPR002873">
    <property type="entry name" value="Rotavirus_NSP3"/>
</dbReference>
<dbReference type="Pfam" id="PF01665">
    <property type="entry name" value="Rota_NSP3"/>
    <property type="match status" value="1"/>
</dbReference>
<dbReference type="SMART" id="SM00358">
    <property type="entry name" value="DSRM"/>
    <property type="match status" value="1"/>
</dbReference>
<dbReference type="SUPFAM" id="SSF54768">
    <property type="entry name" value="dsRNA-binding domain-like"/>
    <property type="match status" value="1"/>
</dbReference>
<dbReference type="SUPFAM" id="SSF69903">
    <property type="entry name" value="NSP3 homodimer"/>
    <property type="match status" value="1"/>
</dbReference>
<dbReference type="PROSITE" id="PS50137">
    <property type="entry name" value="DS_RBD"/>
    <property type="match status" value="1"/>
</dbReference>
<comment type="function">
    <text evidence="3">May play a role in stimulating the translation of viral mRNAs.</text>
</comment>
<comment type="subcellular location">
    <subcellularLocation>
        <location evidence="3">Host cytoplasm</location>
    </subcellularLocation>
</comment>
<comment type="similarity">
    <text evidence="3">Belongs to the rotavirus NSP3 family.</text>
</comment>